<name>ALAT2_ARATH</name>
<organism>
    <name type="scientific">Arabidopsis thaliana</name>
    <name type="common">Mouse-ear cress</name>
    <dbReference type="NCBI Taxonomy" id="3702"/>
    <lineage>
        <taxon>Eukaryota</taxon>
        <taxon>Viridiplantae</taxon>
        <taxon>Streptophyta</taxon>
        <taxon>Embryophyta</taxon>
        <taxon>Tracheophyta</taxon>
        <taxon>Spermatophyta</taxon>
        <taxon>Magnoliopsida</taxon>
        <taxon>eudicotyledons</taxon>
        <taxon>Gunneridae</taxon>
        <taxon>Pentapetalae</taxon>
        <taxon>rosids</taxon>
        <taxon>malvids</taxon>
        <taxon>Brassicales</taxon>
        <taxon>Brassicaceae</taxon>
        <taxon>Camelineae</taxon>
        <taxon>Arabidopsis</taxon>
    </lineage>
</organism>
<evidence type="ECO:0000250" key="1"/>
<evidence type="ECO:0000256" key="2">
    <source>
        <dbReference type="SAM" id="MobiDB-lite"/>
    </source>
</evidence>
<evidence type="ECO:0000269" key="3">
    <source>
    </source>
</evidence>
<evidence type="ECO:0000269" key="4">
    <source>
    </source>
</evidence>
<evidence type="ECO:0000269" key="5">
    <source>
    </source>
</evidence>
<evidence type="ECO:0000305" key="6"/>
<evidence type="ECO:0000305" key="7">
    <source>
    </source>
</evidence>
<sequence length="540" mass="59511">MRRFLINQAKGLVDHSRRQHHHKSPSFLSPQPRPLASSPPALSRFFSSTSEMSASDSTSSLPVTLDSINPKVLKCEYAVRGEIVNIAQKLQEDLKTNKDAYPFDEIIYCNIGNPQSLGQLPIKFFREVLALCDHASLLDESETHGLFSTDSIDRAWRILDHIPGRATGAYSHSQGIKGLRDVIAAGIEARDGFPADPNDIFLTDGASPAVHMMMQLLLSSEKDGILSPIPQYPLYSASIALHGGSLVPYYLDEATGWGLEISDLKKQLEEARSKGISVRALVVINPGNPTGQVLAEENQRDIVNFCKQEGLVLLADEVYQENVYVPDKKFHSFKKVARSLGYGEKDISLVSFQSVSKGYYGECGKRGGYMEVTGFTSDVREQIYKMASVNLCSNISGQILASLVMSPPKPGDDSYDSYMAERDGILSSMAKRAKTLEDALNSLEGVTCNRAEGAMYLFPRINLPQKAIEAAEAEKTAPDAFYCKRLLNATGVVVVPGSGFGQVPGTWHFRCTILPQEDKIPAIVNRLTEFHKSFMDEFRN</sequence>
<reference key="1">
    <citation type="submission" date="2000-06" db="EMBL/GenBank/DDBJ databases">
        <title>Cloning and characterization of Arabidopsis alanine aminotransferase genes.</title>
        <authorList>
            <person name="Ismond K.P."/>
            <person name="Dennis E.S."/>
            <person name="Dolferus R."/>
        </authorList>
    </citation>
    <scope>NUCLEOTIDE SEQUENCE [MRNA] (ISOFORM 1)</scope>
    <source>
        <strain>cv. C24</strain>
    </source>
</reference>
<reference key="2">
    <citation type="journal article" date="2000" name="Nature">
        <title>Sequence and analysis of chromosome 1 of the plant Arabidopsis thaliana.</title>
        <authorList>
            <person name="Theologis A."/>
            <person name="Ecker J.R."/>
            <person name="Palm C.J."/>
            <person name="Federspiel N.A."/>
            <person name="Kaul S."/>
            <person name="White O."/>
            <person name="Alonso J."/>
            <person name="Altafi H."/>
            <person name="Araujo R."/>
            <person name="Bowman C.L."/>
            <person name="Brooks S.Y."/>
            <person name="Buehler E."/>
            <person name="Chan A."/>
            <person name="Chao Q."/>
            <person name="Chen H."/>
            <person name="Cheuk R.F."/>
            <person name="Chin C.W."/>
            <person name="Chung M.K."/>
            <person name="Conn L."/>
            <person name="Conway A.B."/>
            <person name="Conway A.R."/>
            <person name="Creasy T.H."/>
            <person name="Dewar K."/>
            <person name="Dunn P."/>
            <person name="Etgu P."/>
            <person name="Feldblyum T.V."/>
            <person name="Feng J.-D."/>
            <person name="Fong B."/>
            <person name="Fujii C.Y."/>
            <person name="Gill J.E."/>
            <person name="Goldsmith A.D."/>
            <person name="Haas B."/>
            <person name="Hansen N.F."/>
            <person name="Hughes B."/>
            <person name="Huizar L."/>
            <person name="Hunter J.L."/>
            <person name="Jenkins J."/>
            <person name="Johnson-Hopson C."/>
            <person name="Khan S."/>
            <person name="Khaykin E."/>
            <person name="Kim C.J."/>
            <person name="Koo H.L."/>
            <person name="Kremenetskaia I."/>
            <person name="Kurtz D.B."/>
            <person name="Kwan A."/>
            <person name="Lam B."/>
            <person name="Langin-Hooper S."/>
            <person name="Lee A."/>
            <person name="Lee J.M."/>
            <person name="Lenz C.A."/>
            <person name="Li J.H."/>
            <person name="Li Y.-P."/>
            <person name="Lin X."/>
            <person name="Liu S.X."/>
            <person name="Liu Z.A."/>
            <person name="Luros J.S."/>
            <person name="Maiti R."/>
            <person name="Marziali A."/>
            <person name="Militscher J."/>
            <person name="Miranda M."/>
            <person name="Nguyen M."/>
            <person name="Nierman W.C."/>
            <person name="Osborne B.I."/>
            <person name="Pai G."/>
            <person name="Peterson J."/>
            <person name="Pham P.K."/>
            <person name="Rizzo M."/>
            <person name="Rooney T."/>
            <person name="Rowley D."/>
            <person name="Sakano H."/>
            <person name="Salzberg S.L."/>
            <person name="Schwartz J.R."/>
            <person name="Shinn P."/>
            <person name="Southwick A.M."/>
            <person name="Sun H."/>
            <person name="Tallon L.J."/>
            <person name="Tambunga G."/>
            <person name="Toriumi M.J."/>
            <person name="Town C.D."/>
            <person name="Utterback T."/>
            <person name="Van Aken S."/>
            <person name="Vaysberg M."/>
            <person name="Vysotskaia V.S."/>
            <person name="Walker M."/>
            <person name="Wu D."/>
            <person name="Yu G."/>
            <person name="Fraser C.M."/>
            <person name="Venter J.C."/>
            <person name="Davis R.W."/>
        </authorList>
    </citation>
    <scope>NUCLEOTIDE SEQUENCE [LARGE SCALE GENOMIC DNA]</scope>
    <source>
        <strain>cv. Columbia</strain>
    </source>
</reference>
<reference key="3">
    <citation type="journal article" date="2017" name="Plant J.">
        <title>Araport11: a complete reannotation of the Arabidopsis thaliana reference genome.</title>
        <authorList>
            <person name="Cheng C.Y."/>
            <person name="Krishnakumar V."/>
            <person name="Chan A.P."/>
            <person name="Thibaud-Nissen F."/>
            <person name="Schobel S."/>
            <person name="Town C.D."/>
        </authorList>
    </citation>
    <scope>GENOME REANNOTATION</scope>
    <source>
        <strain>cv. Columbia</strain>
    </source>
</reference>
<reference key="4">
    <citation type="journal article" date="2003" name="Science">
        <title>Empirical analysis of transcriptional activity in the Arabidopsis genome.</title>
        <authorList>
            <person name="Yamada K."/>
            <person name="Lim J."/>
            <person name="Dale J.M."/>
            <person name="Chen H."/>
            <person name="Shinn P."/>
            <person name="Palm C.J."/>
            <person name="Southwick A.M."/>
            <person name="Wu H.C."/>
            <person name="Kim C.J."/>
            <person name="Nguyen M."/>
            <person name="Pham P.K."/>
            <person name="Cheuk R.F."/>
            <person name="Karlin-Newmann G."/>
            <person name="Liu S.X."/>
            <person name="Lam B."/>
            <person name="Sakano H."/>
            <person name="Wu T."/>
            <person name="Yu G."/>
            <person name="Miranda M."/>
            <person name="Quach H.L."/>
            <person name="Tripp M."/>
            <person name="Chang C.H."/>
            <person name="Lee J.M."/>
            <person name="Toriumi M.J."/>
            <person name="Chan M.M."/>
            <person name="Tang C.C."/>
            <person name="Onodera C.S."/>
            <person name="Deng J.M."/>
            <person name="Akiyama K."/>
            <person name="Ansari Y."/>
            <person name="Arakawa T."/>
            <person name="Banh J."/>
            <person name="Banno F."/>
            <person name="Bowser L."/>
            <person name="Brooks S.Y."/>
            <person name="Carninci P."/>
            <person name="Chao Q."/>
            <person name="Choy N."/>
            <person name="Enju A."/>
            <person name="Goldsmith A.D."/>
            <person name="Gurjal M."/>
            <person name="Hansen N.F."/>
            <person name="Hayashizaki Y."/>
            <person name="Johnson-Hopson C."/>
            <person name="Hsuan V.W."/>
            <person name="Iida K."/>
            <person name="Karnes M."/>
            <person name="Khan S."/>
            <person name="Koesema E."/>
            <person name="Ishida J."/>
            <person name="Jiang P.X."/>
            <person name="Jones T."/>
            <person name="Kawai J."/>
            <person name="Kamiya A."/>
            <person name="Meyers C."/>
            <person name="Nakajima M."/>
            <person name="Narusaka M."/>
            <person name="Seki M."/>
            <person name="Sakurai T."/>
            <person name="Satou M."/>
            <person name="Tamse R."/>
            <person name="Vaysberg M."/>
            <person name="Wallender E.K."/>
            <person name="Wong C."/>
            <person name="Yamamura Y."/>
            <person name="Yuan S."/>
            <person name="Shinozaki K."/>
            <person name="Davis R.W."/>
            <person name="Theologis A."/>
            <person name="Ecker J.R."/>
        </authorList>
    </citation>
    <scope>NUCLEOTIDE SEQUENCE [LARGE SCALE MRNA] OF 9-540 (ISOFORM 1)</scope>
    <source>
        <strain>cv. Columbia</strain>
    </source>
</reference>
<reference key="5">
    <citation type="journal article" date="2003" name="Plant J.">
        <title>Identification of photorespiratory glutamate:glyoxylate aminotransferase (GGAT) gene in Arabidopsis.</title>
        <authorList>
            <person name="Igarashi D."/>
            <person name="Miwa T."/>
            <person name="Seki M."/>
            <person name="Kobayashi M."/>
            <person name="Kato T."/>
            <person name="Tabata S."/>
            <person name="Shinozaki K."/>
            <person name="Ohsumi C."/>
        </authorList>
    </citation>
    <scope>TISSUE SPECIFICITY</scope>
    <scope>GENE FAMILY</scope>
    <scope>NOMENCLATURE</scope>
</reference>
<reference key="6">
    <citation type="journal article" date="2007" name="Plant J.">
        <title>Alanine aminotransferase catalyses the breakdown of alanine after hypoxia in Arabidopsis thaliana.</title>
        <authorList>
            <person name="Miyashita Y."/>
            <person name="Dolferus R."/>
            <person name="Ismond K.P."/>
            <person name="Good A.G."/>
        </authorList>
    </citation>
    <scope>TISSUE SPECIFICITY</scope>
    <scope>INDUCTION BY HYPOXIC STRESS</scope>
</reference>
<reference key="7">
    <citation type="journal article" date="2015" name="J. Exp. Bot.">
        <title>Identification of cleavage sites and substrate proteins for two mitochondrial intermediate peptidases in Arabidopsis thaliana.</title>
        <authorList>
            <person name="Carrie C."/>
            <person name="Venne A.S."/>
            <person name="Zahedi R.P."/>
            <person name="Soll J."/>
        </authorList>
    </citation>
    <scope>IDENTIFICATION BY MASS SPECTROMETRY</scope>
    <scope>CLEAVAGE OF TRANSIT PEPTIDE AFTER PHE-46</scope>
</reference>
<gene>
    <name type="primary">ALAAT2</name>
    <name type="synonym">AOAT3</name>
    <name type="ordered locus">At1g72330</name>
    <name type="ORF">T10D10.20</name>
    <name type="ORF">T9N14.10</name>
</gene>
<keyword id="KW-0025">Alternative splicing</keyword>
<keyword id="KW-0032">Aminotransferase</keyword>
<keyword id="KW-0496">Mitochondrion</keyword>
<keyword id="KW-0663">Pyridoxal phosphate</keyword>
<keyword id="KW-1185">Reference proteome</keyword>
<keyword id="KW-0808">Transferase</keyword>
<keyword id="KW-0809">Transit peptide</keyword>
<protein>
    <recommendedName>
        <fullName>Alanine aminotransferase 2, mitochondrial</fullName>
        <shortName>AtAlaAT2</shortName>
        <shortName>AtAlaATm</shortName>
        <ecNumber>2.6.1.2</ecNumber>
    </recommendedName>
    <alternativeName>
        <fullName>Alanine-2-oxoglutarate aminotransferase 3</fullName>
        <ecNumber>2.6.1.-</ecNumber>
    </alternativeName>
</protein>
<accession>Q9LDV4</accession>
<accession>F4IDA2</accession>
<accession>F4IDA4</accession>
<accession>Q94C83</accession>
<accession>Q9C7S4</accession>
<dbReference type="EC" id="2.6.1.2"/>
<dbReference type="EC" id="2.6.1.-"/>
<dbReference type="EMBL" id="AF275371">
    <property type="protein sequence ID" value="AAF82781.1"/>
    <property type="molecule type" value="mRNA"/>
</dbReference>
<dbReference type="EMBL" id="AC016529">
    <property type="protein sequence ID" value="AAG52580.1"/>
    <property type="molecule type" value="Genomic_DNA"/>
</dbReference>
<dbReference type="EMBL" id="AC067754">
    <property type="protein sequence ID" value="AAG51787.1"/>
    <property type="status" value="ALT_SEQ"/>
    <property type="molecule type" value="Genomic_DNA"/>
</dbReference>
<dbReference type="EMBL" id="CP002684">
    <property type="protein sequence ID" value="AEE35305.1"/>
    <property type="molecule type" value="Genomic_DNA"/>
</dbReference>
<dbReference type="EMBL" id="CP002684">
    <property type="protein sequence ID" value="AEE35306.1"/>
    <property type="molecule type" value="Genomic_DNA"/>
</dbReference>
<dbReference type="EMBL" id="CP002684">
    <property type="protein sequence ID" value="AEE35307.1"/>
    <property type="status" value="ALT_SEQ"/>
    <property type="molecule type" value="Genomic_DNA"/>
</dbReference>
<dbReference type="EMBL" id="AY035086">
    <property type="protein sequence ID" value="AAK59591.2"/>
    <property type="molecule type" value="mRNA"/>
</dbReference>
<dbReference type="PIR" id="B96747">
    <property type="entry name" value="B96747"/>
</dbReference>
<dbReference type="RefSeq" id="NP_001077811.1">
    <molecule id="Q9LDV4-2"/>
    <property type="nucleotide sequence ID" value="NM_001084342.1"/>
</dbReference>
<dbReference type="RefSeq" id="NP_001185380.1">
    <property type="nucleotide sequence ID" value="NM_001198451.1"/>
</dbReference>
<dbReference type="RefSeq" id="NP_565040.2">
    <molecule id="Q9LDV4-1"/>
    <property type="nucleotide sequence ID" value="NM_105892.5"/>
</dbReference>
<dbReference type="SMR" id="Q9LDV4"/>
<dbReference type="BioGRID" id="28785">
    <property type="interactions" value="13"/>
</dbReference>
<dbReference type="FunCoup" id="Q9LDV4">
    <property type="interactions" value="1900"/>
</dbReference>
<dbReference type="IntAct" id="Q9LDV4">
    <property type="interactions" value="1"/>
</dbReference>
<dbReference type="STRING" id="3702.Q9LDV4"/>
<dbReference type="PaxDb" id="3702-AT1G72330.3"/>
<dbReference type="ProteomicsDB" id="244868">
    <molecule id="Q9LDV4-1"/>
</dbReference>
<dbReference type="EnsemblPlants" id="AT1G72330.1">
    <molecule id="Q9LDV4-1"/>
    <property type="protein sequence ID" value="AT1G72330.1"/>
    <property type="gene ID" value="AT1G72330"/>
</dbReference>
<dbReference type="EnsemblPlants" id="AT1G72330.2">
    <molecule id="Q9LDV4-2"/>
    <property type="protein sequence ID" value="AT1G72330.2"/>
    <property type="gene ID" value="AT1G72330"/>
</dbReference>
<dbReference type="GeneID" id="843565"/>
<dbReference type="Gramene" id="AT1G72330.1">
    <molecule id="Q9LDV4-1"/>
    <property type="protein sequence ID" value="AT1G72330.1"/>
    <property type="gene ID" value="AT1G72330"/>
</dbReference>
<dbReference type="Gramene" id="AT1G72330.2">
    <molecule id="Q9LDV4-2"/>
    <property type="protein sequence ID" value="AT1G72330.2"/>
    <property type="gene ID" value="AT1G72330"/>
</dbReference>
<dbReference type="KEGG" id="ath:AT1G72330"/>
<dbReference type="Araport" id="AT1G72330"/>
<dbReference type="TAIR" id="AT1G72330">
    <property type="gene designation" value="ALAAT2"/>
</dbReference>
<dbReference type="eggNOG" id="KOG0258">
    <property type="taxonomic scope" value="Eukaryota"/>
</dbReference>
<dbReference type="InParanoid" id="Q9LDV4"/>
<dbReference type="OMA" id="LPIRFFR"/>
<dbReference type="PhylomeDB" id="Q9LDV4"/>
<dbReference type="BRENDA" id="2.6.1.2">
    <property type="organism ID" value="399"/>
</dbReference>
<dbReference type="UniPathway" id="UPA00322"/>
<dbReference type="UniPathway" id="UPA00528">
    <property type="reaction ID" value="UER00586"/>
</dbReference>
<dbReference type="PRO" id="PR:Q9LDV4"/>
<dbReference type="Proteomes" id="UP000006548">
    <property type="component" value="Chromosome 1"/>
</dbReference>
<dbReference type="ExpressionAtlas" id="Q9LDV4">
    <property type="expression patterns" value="baseline and differential"/>
</dbReference>
<dbReference type="GO" id="GO:0005739">
    <property type="term" value="C:mitochondrion"/>
    <property type="evidence" value="ECO:0007669"/>
    <property type="project" value="UniProtKB-SubCell"/>
</dbReference>
<dbReference type="GO" id="GO:0004021">
    <property type="term" value="F:L-alanine:2-oxoglutarate aminotransferase activity"/>
    <property type="evidence" value="ECO:0007669"/>
    <property type="project" value="UniProtKB-EC"/>
</dbReference>
<dbReference type="GO" id="GO:0030170">
    <property type="term" value="F:pyridoxal phosphate binding"/>
    <property type="evidence" value="ECO:0007669"/>
    <property type="project" value="InterPro"/>
</dbReference>
<dbReference type="GO" id="GO:0009058">
    <property type="term" value="P:biosynthetic process"/>
    <property type="evidence" value="ECO:0007669"/>
    <property type="project" value="InterPro"/>
</dbReference>
<dbReference type="GO" id="GO:0042853">
    <property type="term" value="P:L-alanine catabolic process"/>
    <property type="evidence" value="ECO:0007669"/>
    <property type="project" value="UniProtKB-UniPathway"/>
</dbReference>
<dbReference type="GO" id="GO:0001666">
    <property type="term" value="P:response to hypoxia"/>
    <property type="evidence" value="ECO:0000270"/>
    <property type="project" value="UniProtKB"/>
</dbReference>
<dbReference type="CDD" id="cd00609">
    <property type="entry name" value="AAT_like"/>
    <property type="match status" value="1"/>
</dbReference>
<dbReference type="FunFam" id="1.10.287.1970:FF:000001">
    <property type="entry name" value="Alanine aminotransferase 2"/>
    <property type="match status" value="1"/>
</dbReference>
<dbReference type="FunFam" id="3.90.1150.10:FF:000151">
    <property type="entry name" value="Alanine aminotransferase 2"/>
    <property type="match status" value="1"/>
</dbReference>
<dbReference type="FunFam" id="3.40.640.10:FF:000012">
    <property type="entry name" value="alanine aminotransferase 2"/>
    <property type="match status" value="1"/>
</dbReference>
<dbReference type="Gene3D" id="1.10.287.1970">
    <property type="match status" value="1"/>
</dbReference>
<dbReference type="Gene3D" id="3.90.1150.10">
    <property type="entry name" value="Aspartate Aminotransferase, domain 1"/>
    <property type="match status" value="1"/>
</dbReference>
<dbReference type="Gene3D" id="3.40.640.10">
    <property type="entry name" value="Type I PLP-dependent aspartate aminotransferase-like (Major domain)"/>
    <property type="match status" value="1"/>
</dbReference>
<dbReference type="InterPro" id="IPR045088">
    <property type="entry name" value="ALAT1/2-like"/>
</dbReference>
<dbReference type="InterPro" id="IPR004839">
    <property type="entry name" value="Aminotransferase_I/II_large"/>
</dbReference>
<dbReference type="InterPro" id="IPR015424">
    <property type="entry name" value="PyrdxlP-dep_Trfase"/>
</dbReference>
<dbReference type="InterPro" id="IPR015421">
    <property type="entry name" value="PyrdxlP-dep_Trfase_major"/>
</dbReference>
<dbReference type="InterPro" id="IPR015422">
    <property type="entry name" value="PyrdxlP-dep_Trfase_small"/>
</dbReference>
<dbReference type="PANTHER" id="PTHR11751">
    <property type="entry name" value="ALANINE AMINOTRANSFERASE"/>
    <property type="match status" value="1"/>
</dbReference>
<dbReference type="PANTHER" id="PTHR11751:SF29">
    <property type="entry name" value="ALANINE TRANSAMINASE"/>
    <property type="match status" value="1"/>
</dbReference>
<dbReference type="Pfam" id="PF00155">
    <property type="entry name" value="Aminotran_1_2"/>
    <property type="match status" value="1"/>
</dbReference>
<dbReference type="SUPFAM" id="SSF53383">
    <property type="entry name" value="PLP-dependent transferases"/>
    <property type="match status" value="1"/>
</dbReference>
<comment type="catalytic activity">
    <reaction>
        <text>L-alanine + 2-oxoglutarate = pyruvate + L-glutamate</text>
        <dbReference type="Rhea" id="RHEA:19453"/>
        <dbReference type="ChEBI" id="CHEBI:15361"/>
        <dbReference type="ChEBI" id="CHEBI:16810"/>
        <dbReference type="ChEBI" id="CHEBI:29985"/>
        <dbReference type="ChEBI" id="CHEBI:57972"/>
        <dbReference type="EC" id="2.6.1.2"/>
    </reaction>
</comment>
<comment type="cofactor">
    <cofactor evidence="1">
        <name>pyridoxal 5'-phosphate</name>
        <dbReference type="ChEBI" id="CHEBI:597326"/>
    </cofactor>
</comment>
<comment type="pathway">
    <text>Photosynthesis; C4 acid pathway.</text>
</comment>
<comment type="pathway">
    <text>Amino-acid degradation; L-alanine degradation via transaminase pathway; pyruvate from L-alanine: step 1/1.</text>
</comment>
<comment type="subunit">
    <text evidence="1">Homodimer.</text>
</comment>
<comment type="subcellular location">
    <subcellularLocation>
        <location evidence="7">Mitochondrion</location>
    </subcellularLocation>
</comment>
<comment type="alternative products">
    <event type="alternative splicing"/>
    <isoform>
        <id>Q9LDV4-1</id>
        <name>1</name>
        <sequence type="displayed"/>
    </isoform>
    <isoform>
        <id>Q9LDV4-2</id>
        <name>2</name>
        <sequence type="described" ref="VSP_042467"/>
    </isoform>
</comment>
<comment type="tissue specificity">
    <text evidence="3 4">Expressed in shoots, essentially in leaves and flowers, mostly in vascular tissues. Also detected in stems and roots.</text>
</comment>
<comment type="induction">
    <text evidence="4">Rapidly induced upon low-oxygen stress in roots and shoots.</text>
</comment>
<comment type="PTM">
    <text evidence="1">The N-terminus is blocked.</text>
</comment>
<comment type="similarity">
    <text evidence="6">Belongs to the class-I pyridoxal-phosphate-dependent aminotransferase family. Alanine aminotransferase subfamily.</text>
</comment>
<comment type="sequence caution" evidence="6">
    <conflict type="erroneous gene model prediction">
        <sequence resource="EMBL-CDS" id="AAG51787"/>
    </conflict>
</comment>
<comment type="sequence caution" evidence="6">
    <conflict type="erroneous gene model prediction">
        <sequence resource="EMBL-CDS" id="AEE35307"/>
    </conflict>
</comment>
<proteinExistence type="evidence at protein level"/>
<feature type="transit peptide" description="Mitochondrion" evidence="5">
    <location>
        <begin position="1"/>
        <end position="46"/>
    </location>
</feature>
<feature type="chain" id="PRO_0000416043" description="Alanine aminotransferase 2, mitochondrial">
    <location>
        <begin position="47"/>
        <end position="540"/>
    </location>
</feature>
<feature type="region of interest" description="Disordered" evidence="2">
    <location>
        <begin position="11"/>
        <end position="40"/>
    </location>
</feature>
<feature type="compositionally biased region" description="Low complexity" evidence="2">
    <location>
        <begin position="28"/>
        <end position="40"/>
    </location>
</feature>
<feature type="modified residue" description="N6-(pyridoxal phosphate)lysine" evidence="1">
    <location>
        <position position="357"/>
    </location>
</feature>
<feature type="splice variant" id="VSP_042467" description="In isoform 2." evidence="6">
    <original>PGDDSYDSYMAERDGILSSMAKRAKTLEDALNSLEGVTCNRAEGAMYLFPRINLPQKAIEAAEAEKTAPDAFYCKRLLNATGVVVVPGSGFGQVPGTWHFRCTILPQEDKIPAIVNRLTEFHKSFMDEFRN</original>
    <variation>KEMEFSHPWLNVQRLWKTLSTV</variation>
    <location>
        <begin position="410"/>
        <end position="540"/>
    </location>
</feature>
<feature type="sequence conflict" description="In Ref. 4; AAK59591." evidence="6" ref="4">
    <original>K</original>
    <variation>E</variation>
    <location>
        <position position="265"/>
    </location>
</feature>